<protein>
    <recommendedName>
        <fullName evidence="1">Histidine ammonia-lyase</fullName>
        <shortName evidence="1">Histidase</shortName>
        <ecNumber evidence="1">4.3.1.3</ecNumber>
    </recommendedName>
</protein>
<evidence type="ECO:0000255" key="1">
    <source>
        <dbReference type="HAMAP-Rule" id="MF_00229"/>
    </source>
</evidence>
<accession>Q11E18</accession>
<comment type="catalytic activity">
    <reaction evidence="1">
        <text>L-histidine = trans-urocanate + NH4(+)</text>
        <dbReference type="Rhea" id="RHEA:21232"/>
        <dbReference type="ChEBI" id="CHEBI:17771"/>
        <dbReference type="ChEBI" id="CHEBI:28938"/>
        <dbReference type="ChEBI" id="CHEBI:57595"/>
        <dbReference type="EC" id="4.3.1.3"/>
    </reaction>
</comment>
<comment type="pathway">
    <text evidence="1">Amino-acid degradation; L-histidine degradation into L-glutamate; N-formimidoyl-L-glutamate from L-histidine: step 1/3.</text>
</comment>
<comment type="subcellular location">
    <subcellularLocation>
        <location evidence="1">Cytoplasm</location>
    </subcellularLocation>
</comment>
<comment type="PTM">
    <text evidence="1">Contains an active site 4-methylidene-imidazol-5-one (MIO), which is formed autocatalytically by cyclization and dehydration of residues Ala-Ser-Gly.</text>
</comment>
<comment type="similarity">
    <text evidence="1">Belongs to the PAL/histidase family.</text>
</comment>
<name>HUTH_CHESB</name>
<dbReference type="EC" id="4.3.1.3" evidence="1"/>
<dbReference type="EMBL" id="CP000390">
    <property type="protein sequence ID" value="ABG64357.1"/>
    <property type="molecule type" value="Genomic_DNA"/>
</dbReference>
<dbReference type="SMR" id="Q11E18"/>
<dbReference type="STRING" id="266779.Meso_2985"/>
<dbReference type="KEGG" id="mes:Meso_2985"/>
<dbReference type="eggNOG" id="COG2986">
    <property type="taxonomic scope" value="Bacteria"/>
</dbReference>
<dbReference type="HOGENOM" id="CLU_014801_4_0_5"/>
<dbReference type="OrthoDB" id="9806955at2"/>
<dbReference type="UniPathway" id="UPA00379">
    <property type="reaction ID" value="UER00549"/>
</dbReference>
<dbReference type="GO" id="GO:0005737">
    <property type="term" value="C:cytoplasm"/>
    <property type="evidence" value="ECO:0007669"/>
    <property type="project" value="UniProtKB-SubCell"/>
</dbReference>
<dbReference type="GO" id="GO:0004397">
    <property type="term" value="F:histidine ammonia-lyase activity"/>
    <property type="evidence" value="ECO:0007669"/>
    <property type="project" value="UniProtKB-UniRule"/>
</dbReference>
<dbReference type="GO" id="GO:0019556">
    <property type="term" value="P:L-histidine catabolic process to glutamate and formamide"/>
    <property type="evidence" value="ECO:0007669"/>
    <property type="project" value="UniProtKB-UniPathway"/>
</dbReference>
<dbReference type="GO" id="GO:0019557">
    <property type="term" value="P:L-histidine catabolic process to glutamate and formate"/>
    <property type="evidence" value="ECO:0007669"/>
    <property type="project" value="UniProtKB-UniPathway"/>
</dbReference>
<dbReference type="CDD" id="cd00332">
    <property type="entry name" value="PAL-HAL"/>
    <property type="match status" value="1"/>
</dbReference>
<dbReference type="FunFam" id="1.10.275.10:FF:000005">
    <property type="entry name" value="Histidine ammonia-lyase"/>
    <property type="match status" value="1"/>
</dbReference>
<dbReference type="FunFam" id="1.20.200.10:FF:000003">
    <property type="entry name" value="Histidine ammonia-lyase"/>
    <property type="match status" value="1"/>
</dbReference>
<dbReference type="Gene3D" id="1.20.200.10">
    <property type="entry name" value="Fumarase/aspartase (Central domain)"/>
    <property type="match status" value="1"/>
</dbReference>
<dbReference type="Gene3D" id="1.10.275.10">
    <property type="entry name" value="Fumarase/aspartase (N-terminal domain)"/>
    <property type="match status" value="1"/>
</dbReference>
<dbReference type="HAMAP" id="MF_00229">
    <property type="entry name" value="His_ammonia_lyase"/>
    <property type="match status" value="1"/>
</dbReference>
<dbReference type="InterPro" id="IPR001106">
    <property type="entry name" value="Aromatic_Lyase"/>
</dbReference>
<dbReference type="InterPro" id="IPR024083">
    <property type="entry name" value="Fumarase/histidase_N"/>
</dbReference>
<dbReference type="InterPro" id="IPR005921">
    <property type="entry name" value="HutH"/>
</dbReference>
<dbReference type="InterPro" id="IPR008948">
    <property type="entry name" value="L-Aspartase-like"/>
</dbReference>
<dbReference type="InterPro" id="IPR022313">
    <property type="entry name" value="Phe/His_NH3-lyase_AS"/>
</dbReference>
<dbReference type="NCBIfam" id="TIGR01225">
    <property type="entry name" value="hutH"/>
    <property type="match status" value="1"/>
</dbReference>
<dbReference type="NCBIfam" id="NF006871">
    <property type="entry name" value="PRK09367.1"/>
    <property type="match status" value="1"/>
</dbReference>
<dbReference type="PANTHER" id="PTHR10362">
    <property type="entry name" value="HISTIDINE AMMONIA-LYASE"/>
    <property type="match status" value="1"/>
</dbReference>
<dbReference type="Pfam" id="PF00221">
    <property type="entry name" value="Lyase_aromatic"/>
    <property type="match status" value="1"/>
</dbReference>
<dbReference type="SUPFAM" id="SSF48557">
    <property type="entry name" value="L-aspartase-like"/>
    <property type="match status" value="1"/>
</dbReference>
<dbReference type="PROSITE" id="PS00488">
    <property type="entry name" value="PAL_HISTIDASE"/>
    <property type="match status" value="1"/>
</dbReference>
<sequence>MTIILHPGSVLLRDLATIYWTGVPARLDPSFDAGIVKAADRIAEIAAGNAPVYGINTGFGKLASIKIDSADVAALQRNLVLSHCCGVGEALPENVVRLMMALKLVSLGRGASGVRLELVRLIEAMLARGVIPVIPEKGSVGASGDLAPLAHMAAVMMGHGEAFFGGERLNGATALLKAGLQPVELAAKEGLALINGTQTSTALALAGLFRAHRAAQSALITGAMSTDAAMGSSAPFHPEIHTLRGHRGQIDTAEALRALLENSPIRQSHIEGDERVQDPYCIRCQPQVDGACLDLLRSVARTLEIEANAVTDNPLVLSDNSVVAGGNFHAEPVAFAADQIVLAICEIGAIAQRRIALLVDPALSYGLPAFLAKKPGLNSGLMIAEVTSAALMSENKQMSHPASVDSTPTSANQEDHVSMACHGARRLLPMTENLFAIIGIEALCAAQGVELRAPLATSPELTKAIAAIRNVVPSLEEDRYMANDLKAATVLIASGSLNESVSSGILPALEV</sequence>
<proteinExistence type="inferred from homology"/>
<keyword id="KW-0963">Cytoplasm</keyword>
<keyword id="KW-0369">Histidine metabolism</keyword>
<keyword id="KW-0456">Lyase</keyword>
<reference key="1">
    <citation type="submission" date="2006-06" db="EMBL/GenBank/DDBJ databases">
        <title>Complete sequence of chromosome of Mesorhizobium sp. BNC1.</title>
        <authorList>
            <consortium name="US DOE Joint Genome Institute"/>
            <person name="Copeland A."/>
            <person name="Lucas S."/>
            <person name="Lapidus A."/>
            <person name="Barry K."/>
            <person name="Detter J.C."/>
            <person name="Glavina del Rio T."/>
            <person name="Hammon N."/>
            <person name="Israni S."/>
            <person name="Dalin E."/>
            <person name="Tice H."/>
            <person name="Pitluck S."/>
            <person name="Chertkov O."/>
            <person name="Brettin T."/>
            <person name="Bruce D."/>
            <person name="Han C."/>
            <person name="Tapia R."/>
            <person name="Gilna P."/>
            <person name="Schmutz J."/>
            <person name="Larimer F."/>
            <person name="Land M."/>
            <person name="Hauser L."/>
            <person name="Kyrpides N."/>
            <person name="Mikhailova N."/>
            <person name="Richardson P."/>
        </authorList>
    </citation>
    <scope>NUCLEOTIDE SEQUENCE [LARGE SCALE GENOMIC DNA]</scope>
    <source>
        <strain>BNC1</strain>
    </source>
</reference>
<organism>
    <name type="scientific">Chelativorans sp. (strain BNC1)</name>
    <dbReference type="NCBI Taxonomy" id="266779"/>
    <lineage>
        <taxon>Bacteria</taxon>
        <taxon>Pseudomonadati</taxon>
        <taxon>Pseudomonadota</taxon>
        <taxon>Alphaproteobacteria</taxon>
        <taxon>Hyphomicrobiales</taxon>
        <taxon>Phyllobacteriaceae</taxon>
        <taxon>Chelativorans</taxon>
    </lineage>
</organism>
<gene>
    <name evidence="1" type="primary">hutH</name>
    <name type="ordered locus">Meso_2985</name>
</gene>
<feature type="chain" id="PRO_1000021560" description="Histidine ammonia-lyase">
    <location>
        <begin position="1"/>
        <end position="511"/>
    </location>
</feature>
<feature type="modified residue" description="2,3-didehydroalanine (Ser)" evidence="1">
    <location>
        <position position="143"/>
    </location>
</feature>
<feature type="cross-link" description="5-imidazolinone (Ala-Gly)" evidence="1">
    <location>
        <begin position="142"/>
        <end position="144"/>
    </location>
</feature>